<feature type="chain" id="PRO_1000092050" description="5'-nucleotidase SurE">
    <location>
        <begin position="1"/>
        <end position="262"/>
    </location>
</feature>
<feature type="binding site" evidence="1">
    <location>
        <position position="8"/>
    </location>
    <ligand>
        <name>a divalent metal cation</name>
        <dbReference type="ChEBI" id="CHEBI:60240"/>
    </ligand>
</feature>
<feature type="binding site" evidence="1">
    <location>
        <position position="9"/>
    </location>
    <ligand>
        <name>a divalent metal cation</name>
        <dbReference type="ChEBI" id="CHEBI:60240"/>
    </ligand>
</feature>
<feature type="binding site" evidence="1">
    <location>
        <position position="40"/>
    </location>
    <ligand>
        <name>a divalent metal cation</name>
        <dbReference type="ChEBI" id="CHEBI:60240"/>
    </ligand>
</feature>
<feature type="binding site" evidence="1">
    <location>
        <position position="92"/>
    </location>
    <ligand>
        <name>a divalent metal cation</name>
        <dbReference type="ChEBI" id="CHEBI:60240"/>
    </ligand>
</feature>
<sequence length="262" mass="28331">MRVLVSNDDGVDAPGIKILADALRNAGHEVMVVAPDRDRSGASNSLTLDTPIRAKQIDMHTYSVAGTPTDCVHLALTGLLNYDPDIVVSGINNTGNLGDDVIYSGTVSAAMEGRFLGLPAVAVSLVTLCREGQQAPQYETAAHAAINIVAQLKTDPLPADTILNVNVPDVTWQQMRGFKVTRLGNRHRSAPCLTQTDPRGHTIYWIGPAGPEQDAGPGTDFDAVRNTYISITPIHVDLTRYQALENVTRWTDRLTAHMDWPT</sequence>
<comment type="function">
    <text evidence="1">Nucleotidase that shows phosphatase activity on nucleoside 5'-monophosphates.</text>
</comment>
<comment type="catalytic activity">
    <reaction evidence="1">
        <text>a ribonucleoside 5'-phosphate + H2O = a ribonucleoside + phosphate</text>
        <dbReference type="Rhea" id="RHEA:12484"/>
        <dbReference type="ChEBI" id="CHEBI:15377"/>
        <dbReference type="ChEBI" id="CHEBI:18254"/>
        <dbReference type="ChEBI" id="CHEBI:43474"/>
        <dbReference type="ChEBI" id="CHEBI:58043"/>
        <dbReference type="EC" id="3.1.3.5"/>
    </reaction>
</comment>
<comment type="cofactor">
    <cofactor evidence="1">
        <name>a divalent metal cation</name>
        <dbReference type="ChEBI" id="CHEBI:60240"/>
    </cofactor>
    <text evidence="1">Binds 1 divalent metal cation per subunit.</text>
</comment>
<comment type="subcellular location">
    <subcellularLocation>
        <location evidence="1">Cytoplasm</location>
    </subcellularLocation>
</comment>
<comment type="similarity">
    <text evidence="1">Belongs to the SurE nucleotidase family.</text>
</comment>
<organism>
    <name type="scientific">Xylella fastidiosa (strain M12)</name>
    <dbReference type="NCBI Taxonomy" id="405440"/>
    <lineage>
        <taxon>Bacteria</taxon>
        <taxon>Pseudomonadati</taxon>
        <taxon>Pseudomonadota</taxon>
        <taxon>Gammaproteobacteria</taxon>
        <taxon>Lysobacterales</taxon>
        <taxon>Lysobacteraceae</taxon>
        <taxon>Xylella</taxon>
    </lineage>
</organism>
<accession>B0U4U5</accession>
<name>SURE_XYLFM</name>
<reference key="1">
    <citation type="journal article" date="2010" name="J. Bacteriol.">
        <title>Whole genome sequences of two Xylella fastidiosa strains (M12 and M23) causing almond leaf scorch disease in California.</title>
        <authorList>
            <person name="Chen J."/>
            <person name="Xie G."/>
            <person name="Han S."/>
            <person name="Chertkov O."/>
            <person name="Sims D."/>
            <person name="Civerolo E.L."/>
        </authorList>
    </citation>
    <scope>NUCLEOTIDE SEQUENCE [LARGE SCALE GENOMIC DNA]</scope>
    <source>
        <strain>M12</strain>
    </source>
</reference>
<protein>
    <recommendedName>
        <fullName evidence="1">5'-nucleotidase SurE</fullName>
        <ecNumber evidence="1">3.1.3.5</ecNumber>
    </recommendedName>
    <alternativeName>
        <fullName evidence="1">Nucleoside 5'-monophosphate phosphohydrolase</fullName>
    </alternativeName>
</protein>
<evidence type="ECO:0000255" key="1">
    <source>
        <dbReference type="HAMAP-Rule" id="MF_00060"/>
    </source>
</evidence>
<proteinExistence type="inferred from homology"/>
<keyword id="KW-0963">Cytoplasm</keyword>
<keyword id="KW-0378">Hydrolase</keyword>
<keyword id="KW-0479">Metal-binding</keyword>
<keyword id="KW-0547">Nucleotide-binding</keyword>
<dbReference type="EC" id="3.1.3.5" evidence="1"/>
<dbReference type="EMBL" id="CP000941">
    <property type="protein sequence ID" value="ACA12862.1"/>
    <property type="molecule type" value="Genomic_DNA"/>
</dbReference>
<dbReference type="RefSeq" id="WP_004084374.1">
    <property type="nucleotide sequence ID" value="NC_010513.1"/>
</dbReference>
<dbReference type="SMR" id="B0U4U5"/>
<dbReference type="GeneID" id="93905670"/>
<dbReference type="KEGG" id="xfm:Xfasm12_1992"/>
<dbReference type="HOGENOM" id="CLU_045192_1_2_6"/>
<dbReference type="GO" id="GO:0005737">
    <property type="term" value="C:cytoplasm"/>
    <property type="evidence" value="ECO:0007669"/>
    <property type="project" value="UniProtKB-SubCell"/>
</dbReference>
<dbReference type="GO" id="GO:0008254">
    <property type="term" value="F:3'-nucleotidase activity"/>
    <property type="evidence" value="ECO:0007669"/>
    <property type="project" value="TreeGrafter"/>
</dbReference>
<dbReference type="GO" id="GO:0008253">
    <property type="term" value="F:5'-nucleotidase activity"/>
    <property type="evidence" value="ECO:0007669"/>
    <property type="project" value="UniProtKB-UniRule"/>
</dbReference>
<dbReference type="GO" id="GO:0004309">
    <property type="term" value="F:exopolyphosphatase activity"/>
    <property type="evidence" value="ECO:0007669"/>
    <property type="project" value="TreeGrafter"/>
</dbReference>
<dbReference type="GO" id="GO:0046872">
    <property type="term" value="F:metal ion binding"/>
    <property type="evidence" value="ECO:0007669"/>
    <property type="project" value="UniProtKB-UniRule"/>
</dbReference>
<dbReference type="GO" id="GO:0000166">
    <property type="term" value="F:nucleotide binding"/>
    <property type="evidence" value="ECO:0007669"/>
    <property type="project" value="UniProtKB-KW"/>
</dbReference>
<dbReference type="FunFam" id="3.40.1210.10:FF:000001">
    <property type="entry name" value="5'/3'-nucleotidase SurE"/>
    <property type="match status" value="1"/>
</dbReference>
<dbReference type="Gene3D" id="3.40.1210.10">
    <property type="entry name" value="Survival protein SurE-like phosphatase/nucleotidase"/>
    <property type="match status" value="1"/>
</dbReference>
<dbReference type="HAMAP" id="MF_00060">
    <property type="entry name" value="SurE"/>
    <property type="match status" value="1"/>
</dbReference>
<dbReference type="InterPro" id="IPR030048">
    <property type="entry name" value="SurE"/>
</dbReference>
<dbReference type="InterPro" id="IPR002828">
    <property type="entry name" value="SurE-like_Pase/nucleotidase"/>
</dbReference>
<dbReference type="InterPro" id="IPR036523">
    <property type="entry name" value="SurE-like_sf"/>
</dbReference>
<dbReference type="NCBIfam" id="NF001489">
    <property type="entry name" value="PRK00346.1-3"/>
    <property type="match status" value="1"/>
</dbReference>
<dbReference type="NCBIfam" id="NF001490">
    <property type="entry name" value="PRK00346.1-4"/>
    <property type="match status" value="1"/>
</dbReference>
<dbReference type="NCBIfam" id="TIGR00087">
    <property type="entry name" value="surE"/>
    <property type="match status" value="1"/>
</dbReference>
<dbReference type="PANTHER" id="PTHR30457">
    <property type="entry name" value="5'-NUCLEOTIDASE SURE"/>
    <property type="match status" value="1"/>
</dbReference>
<dbReference type="PANTHER" id="PTHR30457:SF12">
    <property type="entry name" value="5'_3'-NUCLEOTIDASE SURE"/>
    <property type="match status" value="1"/>
</dbReference>
<dbReference type="Pfam" id="PF01975">
    <property type="entry name" value="SurE"/>
    <property type="match status" value="1"/>
</dbReference>
<dbReference type="SUPFAM" id="SSF64167">
    <property type="entry name" value="SurE-like"/>
    <property type="match status" value="1"/>
</dbReference>
<gene>
    <name evidence="1" type="primary">surE</name>
    <name type="ordered locus">Xfasm12_1992</name>
</gene>